<gene>
    <name evidence="1" type="primary">zipA</name>
    <name type="ordered locus">SG2460</name>
</gene>
<keyword id="KW-0131">Cell cycle</keyword>
<keyword id="KW-0132">Cell division</keyword>
<keyword id="KW-0997">Cell inner membrane</keyword>
<keyword id="KW-1003">Cell membrane</keyword>
<keyword id="KW-0472">Membrane</keyword>
<keyword id="KW-0812">Transmembrane</keyword>
<keyword id="KW-1133">Transmembrane helix</keyword>
<evidence type="ECO:0000255" key="1">
    <source>
        <dbReference type="HAMAP-Rule" id="MF_00509"/>
    </source>
</evidence>
<evidence type="ECO:0000256" key="2">
    <source>
        <dbReference type="SAM" id="MobiDB-lite"/>
    </source>
</evidence>
<comment type="function">
    <text evidence="1">Essential cell division protein that stabilizes the FtsZ protofilaments by cross-linking them and that serves as a cytoplasmic membrane anchor for the Z ring. Also required for the recruitment to the septal ring of downstream cell division proteins.</text>
</comment>
<comment type="subunit">
    <text evidence="1">Interacts with FtsZ via their C-terminal domains.</text>
</comment>
<comment type="subcellular location">
    <subcellularLocation>
        <location evidence="1">Cell inner membrane</location>
        <topology evidence="1">Single-pass type I membrane protein</topology>
    </subcellularLocation>
    <text evidence="1">Localizes to the Z ring in an FtsZ-dependent manner.</text>
</comment>
<comment type="similarity">
    <text evidence="1">Belongs to the ZipA family.</text>
</comment>
<organism>
    <name type="scientific">Salmonella gallinarum (strain 287/91 / NCTC 13346)</name>
    <dbReference type="NCBI Taxonomy" id="550538"/>
    <lineage>
        <taxon>Bacteria</taxon>
        <taxon>Pseudomonadati</taxon>
        <taxon>Pseudomonadota</taxon>
        <taxon>Gammaproteobacteria</taxon>
        <taxon>Enterobacterales</taxon>
        <taxon>Enterobacteriaceae</taxon>
        <taxon>Salmonella</taxon>
    </lineage>
</organism>
<feature type="chain" id="PRO_1000127227" description="Cell division protein ZipA">
    <location>
        <begin position="1"/>
        <end position="328"/>
    </location>
</feature>
<feature type="topological domain" description="Periplasmic" evidence="1">
    <location>
        <begin position="1"/>
        <end position="6"/>
    </location>
</feature>
<feature type="transmembrane region" description="Helical" evidence="1">
    <location>
        <begin position="7"/>
        <end position="27"/>
    </location>
</feature>
<feature type="topological domain" description="Cytoplasmic" evidence="1">
    <location>
        <begin position="28"/>
        <end position="328"/>
    </location>
</feature>
<feature type="region of interest" description="Disordered" evidence="2">
    <location>
        <begin position="42"/>
        <end position="178"/>
    </location>
</feature>
<feature type="compositionally biased region" description="Acidic residues" evidence="2">
    <location>
        <begin position="51"/>
        <end position="63"/>
    </location>
</feature>
<feature type="compositionally biased region" description="Low complexity" evidence="2">
    <location>
        <begin position="85"/>
        <end position="132"/>
    </location>
</feature>
<feature type="compositionally biased region" description="Pro residues" evidence="2">
    <location>
        <begin position="133"/>
        <end position="162"/>
    </location>
</feature>
<feature type="compositionally biased region" description="Low complexity" evidence="2">
    <location>
        <begin position="168"/>
        <end position="178"/>
    </location>
</feature>
<proteinExistence type="inferred from homology"/>
<dbReference type="EMBL" id="AM933173">
    <property type="protein sequence ID" value="CAR38286.1"/>
    <property type="molecule type" value="Genomic_DNA"/>
</dbReference>
<dbReference type="RefSeq" id="WP_000983135.1">
    <property type="nucleotide sequence ID" value="NC_011274.1"/>
</dbReference>
<dbReference type="SMR" id="B5RCQ0"/>
<dbReference type="KEGG" id="seg:SG2460"/>
<dbReference type="HOGENOM" id="CLU_030174_1_0_6"/>
<dbReference type="Proteomes" id="UP000008321">
    <property type="component" value="Chromosome"/>
</dbReference>
<dbReference type="GO" id="GO:0032153">
    <property type="term" value="C:cell division site"/>
    <property type="evidence" value="ECO:0007669"/>
    <property type="project" value="UniProtKB-UniRule"/>
</dbReference>
<dbReference type="GO" id="GO:0005886">
    <property type="term" value="C:plasma membrane"/>
    <property type="evidence" value="ECO:0007669"/>
    <property type="project" value="UniProtKB-SubCell"/>
</dbReference>
<dbReference type="GO" id="GO:0000917">
    <property type="term" value="P:division septum assembly"/>
    <property type="evidence" value="ECO:0007669"/>
    <property type="project" value="TreeGrafter"/>
</dbReference>
<dbReference type="GO" id="GO:0043093">
    <property type="term" value="P:FtsZ-dependent cytokinesis"/>
    <property type="evidence" value="ECO:0007669"/>
    <property type="project" value="UniProtKB-UniRule"/>
</dbReference>
<dbReference type="CDD" id="cd00231">
    <property type="entry name" value="ZipA"/>
    <property type="match status" value="1"/>
</dbReference>
<dbReference type="FunFam" id="3.30.1400.10:FF:000001">
    <property type="entry name" value="Cell division protein ZipA"/>
    <property type="match status" value="1"/>
</dbReference>
<dbReference type="Gene3D" id="3.30.1400.10">
    <property type="entry name" value="ZipA, C-terminal FtsZ-binding domain"/>
    <property type="match status" value="1"/>
</dbReference>
<dbReference type="HAMAP" id="MF_00509">
    <property type="entry name" value="ZipA"/>
    <property type="match status" value="1"/>
</dbReference>
<dbReference type="InterPro" id="IPR011919">
    <property type="entry name" value="Cell_div_ZipA"/>
</dbReference>
<dbReference type="InterPro" id="IPR007449">
    <property type="entry name" value="ZipA_FtsZ-bd_C"/>
</dbReference>
<dbReference type="InterPro" id="IPR036765">
    <property type="entry name" value="ZipA_FtsZ-bd_C_sf"/>
</dbReference>
<dbReference type="NCBIfam" id="TIGR02205">
    <property type="entry name" value="septum_zipA"/>
    <property type="match status" value="1"/>
</dbReference>
<dbReference type="PANTHER" id="PTHR38685">
    <property type="entry name" value="CELL DIVISION PROTEIN ZIPA"/>
    <property type="match status" value="1"/>
</dbReference>
<dbReference type="PANTHER" id="PTHR38685:SF1">
    <property type="entry name" value="CELL DIVISION PROTEIN ZIPA"/>
    <property type="match status" value="1"/>
</dbReference>
<dbReference type="Pfam" id="PF04354">
    <property type="entry name" value="ZipA_C"/>
    <property type="match status" value="1"/>
</dbReference>
<dbReference type="SMART" id="SM00771">
    <property type="entry name" value="ZipA_C"/>
    <property type="match status" value="1"/>
</dbReference>
<dbReference type="SUPFAM" id="SSF64383">
    <property type="entry name" value="Cell-division protein ZipA, C-terminal domain"/>
    <property type="match status" value="1"/>
</dbReference>
<protein>
    <recommendedName>
        <fullName evidence="1">Cell division protein ZipA</fullName>
    </recommendedName>
</protein>
<name>ZIPA_SALG2</name>
<reference key="1">
    <citation type="journal article" date="2008" name="Genome Res.">
        <title>Comparative genome analysis of Salmonella enteritidis PT4 and Salmonella gallinarum 287/91 provides insights into evolutionary and host adaptation pathways.</title>
        <authorList>
            <person name="Thomson N.R."/>
            <person name="Clayton D.J."/>
            <person name="Windhorst D."/>
            <person name="Vernikos G."/>
            <person name="Davidson S."/>
            <person name="Churcher C."/>
            <person name="Quail M.A."/>
            <person name="Stevens M."/>
            <person name="Jones M.A."/>
            <person name="Watson M."/>
            <person name="Barron A."/>
            <person name="Layton A."/>
            <person name="Pickard D."/>
            <person name="Kingsley R.A."/>
            <person name="Bignell A."/>
            <person name="Clark L."/>
            <person name="Harris B."/>
            <person name="Ormond D."/>
            <person name="Abdellah Z."/>
            <person name="Brooks K."/>
            <person name="Cherevach I."/>
            <person name="Chillingworth T."/>
            <person name="Woodward J."/>
            <person name="Norberczak H."/>
            <person name="Lord A."/>
            <person name="Arrowsmith C."/>
            <person name="Jagels K."/>
            <person name="Moule S."/>
            <person name="Mungall K."/>
            <person name="Saunders M."/>
            <person name="Whitehead S."/>
            <person name="Chabalgoity J.A."/>
            <person name="Maskell D."/>
            <person name="Humphreys T."/>
            <person name="Roberts M."/>
            <person name="Barrow P.A."/>
            <person name="Dougan G."/>
            <person name="Parkhill J."/>
        </authorList>
    </citation>
    <scope>NUCLEOTIDE SEQUENCE [LARGE SCALE GENOMIC DNA]</scope>
    <source>
        <strain>287/91 / NCTC 13346</strain>
    </source>
</reference>
<accession>B5RCQ0</accession>
<sequence>MMQDLRLILIIVGAIAIIALLVHGFWTSRKERSSMFRDRPLKRMKSKRDDDSYDDDVEEDEGVGEVRVHRVNHAPGQSQEHDAPRQSPQHQYQPPYASAQPRPAAPPQQQAPMQQPVQQPVQPAPQPQQVQPSAPPVQPPQQQPAPPSQAPQPVAQPAPPPSAQTFQPAEPVVEAEPVVEEAPVVEKPQRKEAVIIMNVAAHHGSELNGEVLLNSIQQSGFKFGDMNIFHRHLSPDGSGPALFSLANMVNPGTFDPEMTDFTTPGVTIFMQVPSYGDALQNFKLMLQSAQHIADEVGGVVLDDQRRMMTPQKLREYQDRIREVMDANA</sequence>